<dbReference type="EMBL" id="AP009256">
    <property type="protein sequence ID" value="BAF39562.1"/>
    <property type="status" value="ALT_INIT"/>
    <property type="molecule type" value="Genomic_DNA"/>
</dbReference>
<dbReference type="RefSeq" id="WP_003809326.1">
    <property type="nucleotide sequence ID" value="NZ_CAXVNC010000004.1"/>
</dbReference>
<dbReference type="SMR" id="A1A1H9"/>
<dbReference type="STRING" id="367928.BAD_0781"/>
<dbReference type="PaxDb" id="1680-BADO_0830"/>
<dbReference type="GeneID" id="4556648"/>
<dbReference type="KEGG" id="bad:BAD_0781"/>
<dbReference type="HOGENOM" id="CLU_040318_2_3_11"/>
<dbReference type="Proteomes" id="UP000008702">
    <property type="component" value="Chromosome"/>
</dbReference>
<dbReference type="GO" id="GO:0022627">
    <property type="term" value="C:cytosolic small ribosomal subunit"/>
    <property type="evidence" value="ECO:0007669"/>
    <property type="project" value="TreeGrafter"/>
</dbReference>
<dbReference type="GO" id="GO:0003735">
    <property type="term" value="F:structural constituent of ribosome"/>
    <property type="evidence" value="ECO:0007669"/>
    <property type="project" value="InterPro"/>
</dbReference>
<dbReference type="GO" id="GO:0006412">
    <property type="term" value="P:translation"/>
    <property type="evidence" value="ECO:0007669"/>
    <property type="project" value="UniProtKB-UniRule"/>
</dbReference>
<dbReference type="CDD" id="cd01425">
    <property type="entry name" value="RPS2"/>
    <property type="match status" value="1"/>
</dbReference>
<dbReference type="FunFam" id="1.10.287.610:FF:000001">
    <property type="entry name" value="30S ribosomal protein S2"/>
    <property type="match status" value="1"/>
</dbReference>
<dbReference type="Gene3D" id="3.40.50.10490">
    <property type="entry name" value="Glucose-6-phosphate isomerase like protein, domain 1"/>
    <property type="match status" value="1"/>
</dbReference>
<dbReference type="Gene3D" id="1.10.287.610">
    <property type="entry name" value="Helix hairpin bin"/>
    <property type="match status" value="1"/>
</dbReference>
<dbReference type="HAMAP" id="MF_00291_B">
    <property type="entry name" value="Ribosomal_uS2_B"/>
    <property type="match status" value="1"/>
</dbReference>
<dbReference type="InterPro" id="IPR001865">
    <property type="entry name" value="Ribosomal_uS2"/>
</dbReference>
<dbReference type="InterPro" id="IPR005706">
    <property type="entry name" value="Ribosomal_uS2_bac/mit/plastid"/>
</dbReference>
<dbReference type="InterPro" id="IPR018130">
    <property type="entry name" value="Ribosomal_uS2_CS"/>
</dbReference>
<dbReference type="InterPro" id="IPR023591">
    <property type="entry name" value="Ribosomal_uS2_flav_dom_sf"/>
</dbReference>
<dbReference type="NCBIfam" id="TIGR01011">
    <property type="entry name" value="rpsB_bact"/>
    <property type="match status" value="1"/>
</dbReference>
<dbReference type="PANTHER" id="PTHR12534">
    <property type="entry name" value="30S RIBOSOMAL PROTEIN S2 PROKARYOTIC AND ORGANELLAR"/>
    <property type="match status" value="1"/>
</dbReference>
<dbReference type="PANTHER" id="PTHR12534:SF0">
    <property type="entry name" value="SMALL RIBOSOMAL SUBUNIT PROTEIN US2M"/>
    <property type="match status" value="1"/>
</dbReference>
<dbReference type="Pfam" id="PF00318">
    <property type="entry name" value="Ribosomal_S2"/>
    <property type="match status" value="1"/>
</dbReference>
<dbReference type="PRINTS" id="PR00395">
    <property type="entry name" value="RIBOSOMALS2"/>
</dbReference>
<dbReference type="SUPFAM" id="SSF52313">
    <property type="entry name" value="Ribosomal protein S2"/>
    <property type="match status" value="1"/>
</dbReference>
<dbReference type="PROSITE" id="PS00962">
    <property type="entry name" value="RIBOSOMAL_S2_1"/>
    <property type="match status" value="1"/>
</dbReference>
<dbReference type="PROSITE" id="PS00963">
    <property type="entry name" value="RIBOSOMAL_S2_2"/>
    <property type="match status" value="1"/>
</dbReference>
<organism>
    <name type="scientific">Bifidobacterium adolescentis (strain ATCC 15703 / DSM 20083 / NCTC 11814 / E194a)</name>
    <dbReference type="NCBI Taxonomy" id="367928"/>
    <lineage>
        <taxon>Bacteria</taxon>
        <taxon>Bacillati</taxon>
        <taxon>Actinomycetota</taxon>
        <taxon>Actinomycetes</taxon>
        <taxon>Bifidobacteriales</taxon>
        <taxon>Bifidobacteriaceae</taxon>
        <taxon>Bifidobacterium</taxon>
    </lineage>
</organism>
<reference key="1">
    <citation type="submission" date="2006-12" db="EMBL/GenBank/DDBJ databases">
        <title>Bifidobacterium adolescentis complete genome sequence.</title>
        <authorList>
            <person name="Suzuki T."/>
            <person name="Tsuda Y."/>
            <person name="Kanou N."/>
            <person name="Inoue T."/>
            <person name="Kumazaki K."/>
            <person name="Nagano S."/>
            <person name="Hirai S."/>
            <person name="Tanaka K."/>
            <person name="Watanabe K."/>
        </authorList>
    </citation>
    <scope>NUCLEOTIDE SEQUENCE [LARGE SCALE GENOMIC DNA]</scope>
    <source>
        <strain>ATCC 15703 / DSM 20083 / NCTC 11814 / E194a</strain>
    </source>
</reference>
<keyword id="KW-1185">Reference proteome</keyword>
<keyword id="KW-0687">Ribonucleoprotein</keyword>
<keyword id="KW-0689">Ribosomal protein</keyword>
<sequence length="272" mass="29887">MAQITMSDMLKAGLHFGHQTRRWNPKMKQFILTQRNGIHIINLFKSLDMIDKAYDFIKATVAHNGTVLFVGTKKQAQEAVSAQATRVNMPYVSERWLGGMLTNFQTVSKRVSRLKELEEMDFTDVHGSGLTKKELLLLEREKDKLAKQLGGIRNMNRTPSAMFVVDVNKEALAVEEAHKLGIPVVAIVDTNADPESVEYPIAANDDAIRGIELLTSLMADAVAEGLLERSGKAAKAEGEAEQPMAAWEKELLTEGAPAAEAPAEAEGETKAE</sequence>
<protein>
    <recommendedName>
        <fullName evidence="1">Small ribosomal subunit protein uS2</fullName>
    </recommendedName>
    <alternativeName>
        <fullName evidence="3">30S ribosomal protein S2</fullName>
    </alternativeName>
</protein>
<proteinExistence type="inferred from homology"/>
<feature type="chain" id="PRO_0000351979" description="Small ribosomal subunit protein uS2">
    <location>
        <begin position="1"/>
        <end position="272"/>
    </location>
</feature>
<feature type="region of interest" description="Disordered" evidence="2">
    <location>
        <begin position="251"/>
        <end position="272"/>
    </location>
</feature>
<feature type="compositionally biased region" description="Low complexity" evidence="2">
    <location>
        <begin position="253"/>
        <end position="264"/>
    </location>
</feature>
<gene>
    <name evidence="1" type="primary">rpsB</name>
    <name type="ordered locus">BAD_0781</name>
</gene>
<evidence type="ECO:0000255" key="1">
    <source>
        <dbReference type="HAMAP-Rule" id="MF_00291"/>
    </source>
</evidence>
<evidence type="ECO:0000256" key="2">
    <source>
        <dbReference type="SAM" id="MobiDB-lite"/>
    </source>
</evidence>
<evidence type="ECO:0000305" key="3"/>
<accession>A1A1H9</accession>
<name>RS2_BIFAA</name>
<comment type="similarity">
    <text evidence="1">Belongs to the universal ribosomal protein uS2 family.</text>
</comment>
<comment type="sequence caution" evidence="3">
    <conflict type="erroneous initiation">
        <sequence resource="EMBL-CDS" id="BAF39562"/>
    </conflict>
</comment>